<proteinExistence type="evidence at transcript level"/>
<sequence length="147" mass="15628">MADFDAVLKCWGPVEADYTTIGGLVLTRLFKEHPETQKLFPKFAGIAQADIAGNAAVSAHGATVLKKLGELLKAKGSHAAILKPLANSHATKHKIPINNFKLISEVLVKVMHEKAGLDAGGQTALRNVMGIIIADLEANYKELGFSG</sequence>
<protein>
    <recommendedName>
        <fullName>Myoglobin</fullName>
    </recommendedName>
    <alternativeName>
        <fullName evidence="2">Nitrite reductase MB</fullName>
        <ecNumber evidence="2">1.7.-.-</ecNumber>
    </alternativeName>
    <alternativeName>
        <fullName evidence="2">Pseudoperoxidase MB</fullName>
        <ecNumber evidence="2">1.11.1.-</ecNumber>
    </alternativeName>
</protein>
<keyword id="KW-0963">Cytoplasm</keyword>
<keyword id="KW-0349">Heme</keyword>
<keyword id="KW-0408">Iron</keyword>
<keyword id="KW-0479">Metal-binding</keyword>
<keyword id="KW-0514">Muscle protein</keyword>
<keyword id="KW-0560">Oxidoreductase</keyword>
<keyword id="KW-0561">Oxygen transport</keyword>
<keyword id="KW-0813">Transport</keyword>
<dbReference type="EC" id="1.7.-.-" evidence="2"/>
<dbReference type="EC" id="1.11.1.-" evidence="2"/>
<dbReference type="EMBL" id="AB104433">
    <property type="protein sequence ID" value="BAC82200.1"/>
    <property type="molecule type" value="mRNA"/>
</dbReference>
<dbReference type="SMR" id="Q76G09"/>
<dbReference type="GO" id="GO:0070062">
    <property type="term" value="C:extracellular exosome"/>
    <property type="evidence" value="ECO:0007669"/>
    <property type="project" value="TreeGrafter"/>
</dbReference>
<dbReference type="GO" id="GO:0016528">
    <property type="term" value="C:sarcoplasm"/>
    <property type="evidence" value="ECO:0000250"/>
    <property type="project" value="UniProtKB"/>
</dbReference>
<dbReference type="GO" id="GO:0020037">
    <property type="term" value="F:heme binding"/>
    <property type="evidence" value="ECO:0007669"/>
    <property type="project" value="InterPro"/>
</dbReference>
<dbReference type="GO" id="GO:0046872">
    <property type="term" value="F:metal ion binding"/>
    <property type="evidence" value="ECO:0007669"/>
    <property type="project" value="UniProtKB-KW"/>
</dbReference>
<dbReference type="GO" id="GO:0098809">
    <property type="term" value="F:nitrite reductase activity"/>
    <property type="evidence" value="ECO:0000250"/>
    <property type="project" value="UniProtKB"/>
</dbReference>
<dbReference type="GO" id="GO:0019825">
    <property type="term" value="F:oxygen binding"/>
    <property type="evidence" value="ECO:0007669"/>
    <property type="project" value="InterPro"/>
</dbReference>
<dbReference type="GO" id="GO:0005344">
    <property type="term" value="F:oxygen carrier activity"/>
    <property type="evidence" value="ECO:0000250"/>
    <property type="project" value="UniProtKB"/>
</dbReference>
<dbReference type="GO" id="GO:0004601">
    <property type="term" value="F:peroxidase activity"/>
    <property type="evidence" value="ECO:0000250"/>
    <property type="project" value="UniProtKB"/>
</dbReference>
<dbReference type="GO" id="GO:0019430">
    <property type="term" value="P:removal of superoxide radicals"/>
    <property type="evidence" value="ECO:0000250"/>
    <property type="project" value="UniProtKB"/>
</dbReference>
<dbReference type="Gene3D" id="6.10.140.2100">
    <property type="match status" value="1"/>
</dbReference>
<dbReference type="Gene3D" id="6.10.140.2110">
    <property type="match status" value="1"/>
</dbReference>
<dbReference type="InterPro" id="IPR000971">
    <property type="entry name" value="Globin"/>
</dbReference>
<dbReference type="InterPro" id="IPR009050">
    <property type="entry name" value="Globin-like_sf"/>
</dbReference>
<dbReference type="InterPro" id="IPR002335">
    <property type="entry name" value="Myoglobin"/>
</dbReference>
<dbReference type="PANTHER" id="PTHR47132">
    <property type="entry name" value="MYOGLOBIN"/>
    <property type="match status" value="1"/>
</dbReference>
<dbReference type="PANTHER" id="PTHR47132:SF1">
    <property type="entry name" value="MYOGLOBIN"/>
    <property type="match status" value="1"/>
</dbReference>
<dbReference type="Pfam" id="PF00042">
    <property type="entry name" value="Globin"/>
    <property type="match status" value="1"/>
</dbReference>
<dbReference type="PRINTS" id="PR00613">
    <property type="entry name" value="MYOGLOBIN"/>
</dbReference>
<dbReference type="SUPFAM" id="SSF46458">
    <property type="entry name" value="Globin-like"/>
    <property type="match status" value="1"/>
</dbReference>
<dbReference type="PROSITE" id="PS01033">
    <property type="entry name" value="GLOBIN"/>
    <property type="match status" value="1"/>
</dbReference>
<accession>Q76G09</accession>
<organism>
    <name type="scientific">Thunnus obesus</name>
    <name type="common">Bigeye tuna</name>
    <dbReference type="NCBI Taxonomy" id="8241"/>
    <lineage>
        <taxon>Eukaryota</taxon>
        <taxon>Metazoa</taxon>
        <taxon>Chordata</taxon>
        <taxon>Craniata</taxon>
        <taxon>Vertebrata</taxon>
        <taxon>Euteleostomi</taxon>
        <taxon>Actinopterygii</taxon>
        <taxon>Neopterygii</taxon>
        <taxon>Teleostei</taxon>
        <taxon>Neoteleostei</taxon>
        <taxon>Acanthomorphata</taxon>
        <taxon>Pelagiaria</taxon>
        <taxon>Scombriformes</taxon>
        <taxon>Scombridae</taxon>
        <taxon>Thunnus</taxon>
    </lineage>
</organism>
<reference key="1">
    <citation type="submission" date="2003-02" db="EMBL/GenBank/DDBJ databases">
        <title>Relationship between the primary structure and thermostability of tuna myoglobins.</title>
        <authorList>
            <person name="Ueki N."/>
            <person name="Ochiai Y."/>
            <person name="Watabe S."/>
        </authorList>
    </citation>
    <scope>NUCLEOTIDE SEQUENCE [MRNA]</scope>
</reference>
<comment type="function">
    <text evidence="2">Monomeric heme protein which primary function is to store oxygen and facilitate its diffusion within muscle tissues. Reversibly binds oxygen through a pentacoordinated heme iron and enables its timely and efficient release as needed during periods of heightened demand. Depending on the oxidative conditions of tissues and cells, and in addition to its ability to bind oxygen, it also has a nitrite reductase activity whereby it regulates the production of bioactive nitric oxide. Under stress conditions, like hypoxia and anoxia, it also protects cells against reactive oxygen species thanks to its pseudoperoxidase activity.</text>
</comment>
<comment type="catalytic activity">
    <reaction evidence="2">
        <text>Fe(III)-heme b-[protein] + nitric oxide + H2O = Fe(II)-heme b-[protein] + nitrite + 2 H(+)</text>
        <dbReference type="Rhea" id="RHEA:77711"/>
        <dbReference type="Rhea" id="RHEA-COMP:18975"/>
        <dbReference type="Rhea" id="RHEA-COMP:18976"/>
        <dbReference type="ChEBI" id="CHEBI:15377"/>
        <dbReference type="ChEBI" id="CHEBI:15378"/>
        <dbReference type="ChEBI" id="CHEBI:16301"/>
        <dbReference type="ChEBI" id="CHEBI:16480"/>
        <dbReference type="ChEBI" id="CHEBI:55376"/>
        <dbReference type="ChEBI" id="CHEBI:60344"/>
    </reaction>
    <physiologicalReaction direction="right-to-left" evidence="2">
        <dbReference type="Rhea" id="RHEA:77713"/>
    </physiologicalReaction>
</comment>
<comment type="catalytic activity">
    <reaction evidence="2">
        <text>H2O2 + AH2 = A + 2 H2O</text>
        <dbReference type="Rhea" id="RHEA:30275"/>
        <dbReference type="ChEBI" id="CHEBI:13193"/>
        <dbReference type="ChEBI" id="CHEBI:15377"/>
        <dbReference type="ChEBI" id="CHEBI:16240"/>
        <dbReference type="ChEBI" id="CHEBI:17499"/>
    </reaction>
</comment>
<comment type="subunit">
    <text evidence="3">Monomeric.</text>
</comment>
<comment type="subcellular location">
    <subcellularLocation>
        <location evidence="2">Cytoplasm</location>
        <location evidence="2">Sarcoplasm</location>
    </subcellularLocation>
</comment>
<comment type="similarity">
    <text evidence="6">Belongs to the globin family.</text>
</comment>
<name>MYG_THUOB</name>
<evidence type="ECO:0000250" key="1"/>
<evidence type="ECO:0000250" key="2">
    <source>
        <dbReference type="UniProtKB" id="P02144"/>
    </source>
</evidence>
<evidence type="ECO:0000250" key="3">
    <source>
        <dbReference type="UniProtKB" id="P02185"/>
    </source>
</evidence>
<evidence type="ECO:0000250" key="4">
    <source>
        <dbReference type="UniProtKB" id="P02189"/>
    </source>
</evidence>
<evidence type="ECO:0000250" key="5">
    <source>
        <dbReference type="UniProtKB" id="P68082"/>
    </source>
</evidence>
<evidence type="ECO:0000255" key="6">
    <source>
        <dbReference type="PROSITE-ProRule" id="PRU00238"/>
    </source>
</evidence>
<gene>
    <name type="primary">mb</name>
</gene>
<feature type="initiator methionine" description="Removed" evidence="1">
    <location>
        <position position="1"/>
    </location>
</feature>
<feature type="chain" id="PRO_0000053376" description="Myoglobin">
    <location>
        <begin position="2"/>
        <end position="147"/>
    </location>
</feature>
<feature type="domain" description="Globin" evidence="6">
    <location>
        <begin position="2"/>
        <end position="141"/>
    </location>
</feature>
<feature type="binding site" evidence="5">
    <location>
        <position position="60"/>
    </location>
    <ligand>
        <name>nitrite</name>
        <dbReference type="ChEBI" id="CHEBI:16301"/>
    </ligand>
</feature>
<feature type="binding site" evidence="4 6">
    <location>
        <position position="60"/>
    </location>
    <ligand>
        <name>O2</name>
        <dbReference type="ChEBI" id="CHEBI:15379"/>
    </ligand>
</feature>
<feature type="binding site" description="proximal binding residue" evidence="2">
    <location>
        <position position="89"/>
    </location>
    <ligand>
        <name>heme b</name>
        <dbReference type="ChEBI" id="CHEBI:60344"/>
    </ligand>
    <ligandPart>
        <name>Fe</name>
        <dbReference type="ChEBI" id="CHEBI:18248"/>
    </ligandPart>
</feature>